<evidence type="ECO:0000255" key="1">
    <source>
        <dbReference type="HAMAP-Rule" id="MF_02113"/>
    </source>
</evidence>
<name>PSB_ACIC1</name>
<reference key="1">
    <citation type="journal article" date="2009" name="Genome Res.">
        <title>Complete genome of the cellulolytic thermophile Acidothermus cellulolyticus 11B provides insights into its ecophysiological and evolutionary adaptations.</title>
        <authorList>
            <person name="Barabote R.D."/>
            <person name="Xie G."/>
            <person name="Leu D.H."/>
            <person name="Normand P."/>
            <person name="Necsulea A."/>
            <person name="Daubin V."/>
            <person name="Medigue C."/>
            <person name="Adney W.S."/>
            <person name="Xu X.C."/>
            <person name="Lapidus A."/>
            <person name="Parales R.E."/>
            <person name="Detter C."/>
            <person name="Pujic P."/>
            <person name="Bruce D."/>
            <person name="Lavire C."/>
            <person name="Challacombe J.F."/>
            <person name="Brettin T.S."/>
            <person name="Berry A.M."/>
        </authorList>
    </citation>
    <scope>NUCLEOTIDE SEQUENCE [LARGE SCALE GENOMIC DNA]</scope>
    <source>
        <strain>ATCC 43068 / DSM 8971 / 11B</strain>
    </source>
</reference>
<feature type="propeptide" id="PRO_0000397490" description="Removed in mature form; by autocatalysis" evidence="1">
    <location>
        <begin position="1"/>
        <end position="58"/>
    </location>
</feature>
<feature type="chain" id="PRO_0000397491" description="Proteasome subunit beta">
    <location>
        <begin position="59"/>
        <end position="290"/>
    </location>
</feature>
<feature type="active site" description="Nucleophile" evidence="1">
    <location>
        <position position="59"/>
    </location>
</feature>
<sequence>MTTSGGLTGPGAFGRLPQPFHQPGITSFVEFLALQAPDLLPGRLQMPAGGQPPEVPHGTTIVAVAYQGGVVMAGDRRATMGNVIAQRDIEKVFQTDEHSCVGIAGSAGIALEVVRLFQVELEHYEKLQGTTLSLEGKANRLAMMIRANLPMALQGLAVVPLFAGYDLFADDPQRAGRIFSFDVTGGRYEEHSFHAVGSGSTFARGALKKLFRDDFDEPHAVRTCIEALYDAADDDSATGGPDLTRRIYPVVAVVDANGFRRLADDTVGGVVEQVIAARMANPGGPVAVLP</sequence>
<organism>
    <name type="scientific">Acidothermus cellulolyticus (strain ATCC 43068 / DSM 8971 / 11B)</name>
    <dbReference type="NCBI Taxonomy" id="351607"/>
    <lineage>
        <taxon>Bacteria</taxon>
        <taxon>Bacillati</taxon>
        <taxon>Actinomycetota</taxon>
        <taxon>Actinomycetes</taxon>
        <taxon>Acidothermales</taxon>
        <taxon>Acidothermaceae</taxon>
        <taxon>Acidothermus</taxon>
    </lineage>
</organism>
<dbReference type="EC" id="3.4.25.1" evidence="1"/>
<dbReference type="EMBL" id="CP000481">
    <property type="protein sequence ID" value="ABK52960.1"/>
    <property type="molecule type" value="Genomic_DNA"/>
</dbReference>
<dbReference type="RefSeq" id="WP_011720023.1">
    <property type="nucleotide sequence ID" value="NC_008578.1"/>
</dbReference>
<dbReference type="SMR" id="A0LU50"/>
<dbReference type="FunCoup" id="A0LU50">
    <property type="interactions" value="219"/>
</dbReference>
<dbReference type="STRING" id="351607.Acel_1188"/>
<dbReference type="MEROPS" id="T01.005"/>
<dbReference type="KEGG" id="ace:Acel_1188"/>
<dbReference type="eggNOG" id="COG0638">
    <property type="taxonomic scope" value="Bacteria"/>
</dbReference>
<dbReference type="HOGENOM" id="CLU_035750_2_0_11"/>
<dbReference type="InParanoid" id="A0LU50"/>
<dbReference type="OrthoDB" id="5174038at2"/>
<dbReference type="UniPathway" id="UPA00997"/>
<dbReference type="Proteomes" id="UP000008221">
    <property type="component" value="Chromosome"/>
</dbReference>
<dbReference type="GO" id="GO:0005737">
    <property type="term" value="C:cytoplasm"/>
    <property type="evidence" value="ECO:0007669"/>
    <property type="project" value="UniProtKB-SubCell"/>
</dbReference>
<dbReference type="GO" id="GO:0019774">
    <property type="term" value="C:proteasome core complex, beta-subunit complex"/>
    <property type="evidence" value="ECO:0007669"/>
    <property type="project" value="UniProtKB-UniRule"/>
</dbReference>
<dbReference type="GO" id="GO:0004298">
    <property type="term" value="F:threonine-type endopeptidase activity"/>
    <property type="evidence" value="ECO:0007669"/>
    <property type="project" value="UniProtKB-UniRule"/>
</dbReference>
<dbReference type="GO" id="GO:0019941">
    <property type="term" value="P:modification-dependent protein catabolic process"/>
    <property type="evidence" value="ECO:0007669"/>
    <property type="project" value="UniProtKB-UniRule"/>
</dbReference>
<dbReference type="GO" id="GO:0010498">
    <property type="term" value="P:proteasomal protein catabolic process"/>
    <property type="evidence" value="ECO:0007669"/>
    <property type="project" value="UniProtKB-UniRule"/>
</dbReference>
<dbReference type="CDD" id="cd01906">
    <property type="entry name" value="proteasome_protease_HslV"/>
    <property type="match status" value="1"/>
</dbReference>
<dbReference type="Gene3D" id="3.60.20.10">
    <property type="entry name" value="Glutamine Phosphoribosylpyrophosphate, subunit 1, domain 1"/>
    <property type="match status" value="1"/>
</dbReference>
<dbReference type="HAMAP" id="MF_02113_B">
    <property type="entry name" value="Proteasome_B_B"/>
    <property type="match status" value="1"/>
</dbReference>
<dbReference type="InterPro" id="IPR029055">
    <property type="entry name" value="Ntn_hydrolases_N"/>
</dbReference>
<dbReference type="InterPro" id="IPR000243">
    <property type="entry name" value="Pept_T1A_subB"/>
</dbReference>
<dbReference type="InterPro" id="IPR001353">
    <property type="entry name" value="Proteasome_sua/b"/>
</dbReference>
<dbReference type="InterPro" id="IPR023333">
    <property type="entry name" value="Proteasome_suB-type"/>
</dbReference>
<dbReference type="InterPro" id="IPR022483">
    <property type="entry name" value="PSB_actinobac"/>
</dbReference>
<dbReference type="NCBIfam" id="TIGR03690">
    <property type="entry name" value="20S_bact_beta"/>
    <property type="match status" value="1"/>
</dbReference>
<dbReference type="PANTHER" id="PTHR32194:SF0">
    <property type="entry name" value="ATP-DEPENDENT PROTEASE SUBUNIT HSLV"/>
    <property type="match status" value="1"/>
</dbReference>
<dbReference type="PANTHER" id="PTHR32194">
    <property type="entry name" value="METALLOPROTEASE TLDD"/>
    <property type="match status" value="1"/>
</dbReference>
<dbReference type="Pfam" id="PF00227">
    <property type="entry name" value="Proteasome"/>
    <property type="match status" value="1"/>
</dbReference>
<dbReference type="PRINTS" id="PR00141">
    <property type="entry name" value="PROTEASOME"/>
</dbReference>
<dbReference type="SUPFAM" id="SSF56235">
    <property type="entry name" value="N-terminal nucleophile aminohydrolases (Ntn hydrolases)"/>
    <property type="match status" value="1"/>
</dbReference>
<dbReference type="PROSITE" id="PS51476">
    <property type="entry name" value="PROTEASOME_BETA_2"/>
    <property type="match status" value="1"/>
</dbReference>
<proteinExistence type="inferred from homology"/>
<accession>A0LU50</accession>
<keyword id="KW-0068">Autocatalytic cleavage</keyword>
<keyword id="KW-0963">Cytoplasm</keyword>
<keyword id="KW-0378">Hydrolase</keyword>
<keyword id="KW-0645">Protease</keyword>
<keyword id="KW-0647">Proteasome</keyword>
<keyword id="KW-1185">Reference proteome</keyword>
<keyword id="KW-0888">Threonine protease</keyword>
<keyword id="KW-0865">Zymogen</keyword>
<comment type="function">
    <text evidence="1">Component of the proteasome core, a large protease complex with broad specificity involved in protein degradation.</text>
</comment>
<comment type="catalytic activity">
    <reaction evidence="1">
        <text>Cleavage of peptide bonds with very broad specificity.</text>
        <dbReference type="EC" id="3.4.25.1"/>
    </reaction>
</comment>
<comment type="activity regulation">
    <text evidence="1">The formation of the proteasomal ATPase ARC-20S proteasome complex, likely via the docking of the C-termini of ARC into the intersubunit pockets in the alpha-rings, may trigger opening of the gate for substrate entry. Interconversion between the open-gate and close-gate conformations leads to a dynamic regulation of the 20S proteasome proteolysis activity.</text>
</comment>
<comment type="pathway">
    <text evidence="1">Protein degradation; proteasomal Pup-dependent pathway.</text>
</comment>
<comment type="subunit">
    <text evidence="1">The 20S proteasome core is composed of 14 alpha and 14 beta subunits that assemble into four stacked heptameric rings, resulting in a barrel-shaped structure. The two inner rings, each composed of seven catalytic beta subunits, are sandwiched by two outer rings, each composed of seven alpha subunits. The catalytic chamber with the active sites is on the inside of the barrel. Has a gated structure, the ends of the cylinder being occluded by the N-termini of the alpha-subunits. Is capped by the proteasome-associated ATPase, ARC.</text>
</comment>
<comment type="subcellular location">
    <subcellularLocation>
        <location evidence="1">Cytoplasm</location>
    </subcellularLocation>
</comment>
<comment type="similarity">
    <text evidence="1">Belongs to the peptidase T1B family.</text>
</comment>
<protein>
    <recommendedName>
        <fullName evidence="1">Proteasome subunit beta</fullName>
        <ecNumber evidence="1">3.4.25.1</ecNumber>
    </recommendedName>
    <alternativeName>
        <fullName evidence="1">20S proteasome beta subunit</fullName>
    </alternativeName>
    <alternativeName>
        <fullName evidence="1">Proteasome core protein PrcB</fullName>
    </alternativeName>
</protein>
<gene>
    <name evidence="1" type="primary">prcB</name>
    <name type="ordered locus">Acel_1188</name>
</gene>